<evidence type="ECO:0000255" key="1">
    <source>
        <dbReference type="HAMAP-Rule" id="MF_02006"/>
    </source>
</evidence>
<comment type="function">
    <text evidence="1">Catalyzes the attachment of tyrosine to tRNA(Tyr) in a two-step reaction: tyrosine is first activated by ATP to form Tyr-AMP and then transferred to the acceptor end of tRNA(Tyr).</text>
</comment>
<comment type="catalytic activity">
    <reaction evidence="1">
        <text>tRNA(Tyr) + L-tyrosine + ATP = L-tyrosyl-tRNA(Tyr) + AMP + diphosphate + H(+)</text>
        <dbReference type="Rhea" id="RHEA:10220"/>
        <dbReference type="Rhea" id="RHEA-COMP:9706"/>
        <dbReference type="Rhea" id="RHEA-COMP:9707"/>
        <dbReference type="ChEBI" id="CHEBI:15378"/>
        <dbReference type="ChEBI" id="CHEBI:30616"/>
        <dbReference type="ChEBI" id="CHEBI:33019"/>
        <dbReference type="ChEBI" id="CHEBI:58315"/>
        <dbReference type="ChEBI" id="CHEBI:78442"/>
        <dbReference type="ChEBI" id="CHEBI:78536"/>
        <dbReference type="ChEBI" id="CHEBI:456215"/>
        <dbReference type="EC" id="6.1.1.1"/>
    </reaction>
</comment>
<comment type="subunit">
    <text evidence="1">Homodimer.</text>
</comment>
<comment type="subcellular location">
    <subcellularLocation>
        <location evidence="1">Cytoplasm</location>
    </subcellularLocation>
</comment>
<comment type="similarity">
    <text evidence="1">Belongs to the class-I aminoacyl-tRNA synthetase family. TyrS type 1 subfamily.</text>
</comment>
<sequence>MHKVLTELRDREILKDISNEEKFLSLPKNSGVYVGFDPTADSLHLGNYVQIVNLIRFKKHNWNALAVLGGATGMIGDPSFRSTERVLLSTEELLKNKNKIKSQLESFGLKVFDNYEIYKDISFLDFLKNIGKLINVSYMLAKDSVKDRLAQGLSFTEFSYQIIQGYDFLHLYQNQDIFVQYGGSDQWGNITTGIEMISKVVGDNHKAIAITANLLTDSNGNKFGKSTGGGNLWLDAQKTKPFDMYQFLINQPDSEVEKLLKWLTFLEISEIKDLVNKHNKNPKDRLAQKALAYEVIKDIHGKSAAENCTFLSEMLFNLSLDLSKVTLENMEFAYNQIESFEVEKGVNLVNFLVENKILQSKRLAREFIASKSLKFNYEPIDEDFSVSSNYFEGKYATLHLGKKKILICKVK</sequence>
<feature type="chain" id="PRO_0000234738" description="Tyrosine--tRNA ligase">
    <location>
        <begin position="1"/>
        <end position="411"/>
    </location>
</feature>
<feature type="domain" description="S4 RNA-binding" evidence="1">
    <location>
        <begin position="346"/>
        <end position="410"/>
    </location>
</feature>
<feature type="short sequence motif" description="'HIGH' region">
    <location>
        <begin position="38"/>
        <end position="47"/>
    </location>
</feature>
<feature type="short sequence motif" description="'KMSKS' region">
    <location>
        <begin position="222"/>
        <end position="226"/>
    </location>
</feature>
<feature type="binding site" evidence="1">
    <location>
        <position position="33"/>
    </location>
    <ligand>
        <name>L-tyrosine</name>
        <dbReference type="ChEBI" id="CHEBI:58315"/>
    </ligand>
</feature>
<feature type="binding site" evidence="1">
    <location>
        <position position="160"/>
    </location>
    <ligand>
        <name>L-tyrosine</name>
        <dbReference type="ChEBI" id="CHEBI:58315"/>
    </ligand>
</feature>
<feature type="binding site" evidence="1">
    <location>
        <position position="164"/>
    </location>
    <ligand>
        <name>L-tyrosine</name>
        <dbReference type="ChEBI" id="CHEBI:58315"/>
    </ligand>
</feature>
<feature type="binding site" evidence="1">
    <location>
        <position position="225"/>
    </location>
    <ligand>
        <name>ATP</name>
        <dbReference type="ChEBI" id="CHEBI:30616"/>
    </ligand>
</feature>
<name>SYY_MYCS5</name>
<gene>
    <name evidence="1" type="primary">tyrS</name>
    <name type="ordered locus">MS53_0622</name>
</gene>
<organism>
    <name type="scientific">Mycoplasmopsis synoviae (strain 53)</name>
    <name type="common">Mycoplasma synoviae</name>
    <dbReference type="NCBI Taxonomy" id="262723"/>
    <lineage>
        <taxon>Bacteria</taxon>
        <taxon>Bacillati</taxon>
        <taxon>Mycoplasmatota</taxon>
        <taxon>Mycoplasmoidales</taxon>
        <taxon>Metamycoplasmataceae</taxon>
        <taxon>Mycoplasmopsis</taxon>
    </lineage>
</organism>
<dbReference type="EC" id="6.1.1.1" evidence="1"/>
<dbReference type="EMBL" id="AE017245">
    <property type="protein sequence ID" value="AAZ44029.1"/>
    <property type="molecule type" value="Genomic_DNA"/>
</dbReference>
<dbReference type="RefSeq" id="WP_011283758.1">
    <property type="nucleotide sequence ID" value="NC_007294.1"/>
</dbReference>
<dbReference type="SMR" id="Q4A5E2"/>
<dbReference type="STRING" id="262723.MS53_0622"/>
<dbReference type="KEGG" id="msy:MS53_0622"/>
<dbReference type="eggNOG" id="COG0162">
    <property type="taxonomic scope" value="Bacteria"/>
</dbReference>
<dbReference type="HOGENOM" id="CLU_024003_0_2_14"/>
<dbReference type="OrthoDB" id="9804243at2"/>
<dbReference type="Proteomes" id="UP000000549">
    <property type="component" value="Chromosome"/>
</dbReference>
<dbReference type="GO" id="GO:0005829">
    <property type="term" value="C:cytosol"/>
    <property type="evidence" value="ECO:0007669"/>
    <property type="project" value="TreeGrafter"/>
</dbReference>
<dbReference type="GO" id="GO:0005524">
    <property type="term" value="F:ATP binding"/>
    <property type="evidence" value="ECO:0007669"/>
    <property type="project" value="UniProtKB-UniRule"/>
</dbReference>
<dbReference type="GO" id="GO:0003723">
    <property type="term" value="F:RNA binding"/>
    <property type="evidence" value="ECO:0007669"/>
    <property type="project" value="UniProtKB-KW"/>
</dbReference>
<dbReference type="GO" id="GO:0004831">
    <property type="term" value="F:tyrosine-tRNA ligase activity"/>
    <property type="evidence" value="ECO:0007669"/>
    <property type="project" value="UniProtKB-UniRule"/>
</dbReference>
<dbReference type="GO" id="GO:0006437">
    <property type="term" value="P:tyrosyl-tRNA aminoacylation"/>
    <property type="evidence" value="ECO:0007669"/>
    <property type="project" value="UniProtKB-UniRule"/>
</dbReference>
<dbReference type="CDD" id="cd00805">
    <property type="entry name" value="TyrRS_core"/>
    <property type="match status" value="1"/>
</dbReference>
<dbReference type="FunFam" id="1.10.240.10:FF:000001">
    <property type="entry name" value="Tyrosine--tRNA ligase"/>
    <property type="match status" value="1"/>
</dbReference>
<dbReference type="Gene3D" id="3.40.50.620">
    <property type="entry name" value="HUPs"/>
    <property type="match status" value="1"/>
</dbReference>
<dbReference type="Gene3D" id="3.10.290.10">
    <property type="entry name" value="RNA-binding S4 domain"/>
    <property type="match status" value="1"/>
</dbReference>
<dbReference type="Gene3D" id="1.10.240.10">
    <property type="entry name" value="Tyrosyl-Transfer RNA Synthetase"/>
    <property type="match status" value="1"/>
</dbReference>
<dbReference type="HAMAP" id="MF_02006">
    <property type="entry name" value="Tyr_tRNA_synth_type1"/>
    <property type="match status" value="1"/>
</dbReference>
<dbReference type="InterPro" id="IPR001412">
    <property type="entry name" value="aa-tRNA-synth_I_CS"/>
</dbReference>
<dbReference type="InterPro" id="IPR002305">
    <property type="entry name" value="aa-tRNA-synth_Ic"/>
</dbReference>
<dbReference type="InterPro" id="IPR014729">
    <property type="entry name" value="Rossmann-like_a/b/a_fold"/>
</dbReference>
<dbReference type="InterPro" id="IPR036986">
    <property type="entry name" value="S4_RNA-bd_sf"/>
</dbReference>
<dbReference type="InterPro" id="IPR054608">
    <property type="entry name" value="SYY-like_C"/>
</dbReference>
<dbReference type="InterPro" id="IPR002307">
    <property type="entry name" value="Tyr-tRNA-ligase"/>
</dbReference>
<dbReference type="InterPro" id="IPR024088">
    <property type="entry name" value="Tyr-tRNA-ligase_bac-type"/>
</dbReference>
<dbReference type="InterPro" id="IPR024107">
    <property type="entry name" value="Tyr-tRNA-ligase_bac_1"/>
</dbReference>
<dbReference type="NCBIfam" id="TIGR00234">
    <property type="entry name" value="tyrS"/>
    <property type="match status" value="1"/>
</dbReference>
<dbReference type="PANTHER" id="PTHR11766:SF0">
    <property type="entry name" value="TYROSINE--TRNA LIGASE, MITOCHONDRIAL"/>
    <property type="match status" value="1"/>
</dbReference>
<dbReference type="PANTHER" id="PTHR11766">
    <property type="entry name" value="TYROSYL-TRNA SYNTHETASE"/>
    <property type="match status" value="1"/>
</dbReference>
<dbReference type="Pfam" id="PF22421">
    <property type="entry name" value="SYY_C-terminal"/>
    <property type="match status" value="1"/>
</dbReference>
<dbReference type="Pfam" id="PF00579">
    <property type="entry name" value="tRNA-synt_1b"/>
    <property type="match status" value="1"/>
</dbReference>
<dbReference type="PRINTS" id="PR01040">
    <property type="entry name" value="TRNASYNTHTYR"/>
</dbReference>
<dbReference type="SUPFAM" id="SSF55174">
    <property type="entry name" value="Alpha-L RNA-binding motif"/>
    <property type="match status" value="1"/>
</dbReference>
<dbReference type="SUPFAM" id="SSF52374">
    <property type="entry name" value="Nucleotidylyl transferase"/>
    <property type="match status" value="1"/>
</dbReference>
<dbReference type="PROSITE" id="PS00178">
    <property type="entry name" value="AA_TRNA_LIGASE_I"/>
    <property type="match status" value="1"/>
</dbReference>
<dbReference type="PROSITE" id="PS50889">
    <property type="entry name" value="S4"/>
    <property type="match status" value="1"/>
</dbReference>
<proteinExistence type="inferred from homology"/>
<protein>
    <recommendedName>
        <fullName evidence="1">Tyrosine--tRNA ligase</fullName>
        <ecNumber evidence="1">6.1.1.1</ecNumber>
    </recommendedName>
    <alternativeName>
        <fullName evidence="1">Tyrosyl-tRNA synthetase</fullName>
        <shortName evidence="1">TyrRS</shortName>
    </alternativeName>
</protein>
<accession>Q4A5E2</accession>
<keyword id="KW-0030">Aminoacyl-tRNA synthetase</keyword>
<keyword id="KW-0067">ATP-binding</keyword>
<keyword id="KW-0963">Cytoplasm</keyword>
<keyword id="KW-0436">Ligase</keyword>
<keyword id="KW-0547">Nucleotide-binding</keyword>
<keyword id="KW-0648">Protein biosynthesis</keyword>
<keyword id="KW-1185">Reference proteome</keyword>
<keyword id="KW-0694">RNA-binding</keyword>
<reference key="1">
    <citation type="journal article" date="2005" name="J. Bacteriol.">
        <title>Swine and poultry pathogens: the complete genome sequences of two strains of Mycoplasma hyopneumoniae and a strain of Mycoplasma synoviae.</title>
        <authorList>
            <person name="Vasconcelos A.T.R."/>
            <person name="Ferreira H.B."/>
            <person name="Bizarro C.V."/>
            <person name="Bonatto S.L."/>
            <person name="Carvalho M.O."/>
            <person name="Pinto P.M."/>
            <person name="Almeida D.F."/>
            <person name="Almeida L.G.P."/>
            <person name="Almeida R."/>
            <person name="Alves-Junior L."/>
            <person name="Assuncao E.N."/>
            <person name="Azevedo V.A.C."/>
            <person name="Bogo M.R."/>
            <person name="Brigido M.M."/>
            <person name="Brocchi M."/>
            <person name="Burity H.A."/>
            <person name="Camargo A.A."/>
            <person name="Camargo S.S."/>
            <person name="Carepo M.S."/>
            <person name="Carraro D.M."/>
            <person name="de Mattos Cascardo J.C."/>
            <person name="Castro L.A."/>
            <person name="Cavalcanti G."/>
            <person name="Chemale G."/>
            <person name="Collevatti R.G."/>
            <person name="Cunha C.W."/>
            <person name="Dallagiovanna B."/>
            <person name="Dambros B.P."/>
            <person name="Dellagostin O.A."/>
            <person name="Falcao C."/>
            <person name="Fantinatti-Garboggini F."/>
            <person name="Felipe M.S.S."/>
            <person name="Fiorentin L."/>
            <person name="Franco G.R."/>
            <person name="Freitas N.S.A."/>
            <person name="Frias D."/>
            <person name="Grangeiro T.B."/>
            <person name="Grisard E.C."/>
            <person name="Guimaraes C.T."/>
            <person name="Hungria M."/>
            <person name="Jardim S.N."/>
            <person name="Krieger M.A."/>
            <person name="Laurino J.P."/>
            <person name="Lima L.F.A."/>
            <person name="Lopes M.I."/>
            <person name="Loreto E.L.S."/>
            <person name="Madeira H.M.F."/>
            <person name="Manfio G.P."/>
            <person name="Maranhao A.Q."/>
            <person name="Martinkovics C.T."/>
            <person name="Medeiros S.R.B."/>
            <person name="Moreira M.A.M."/>
            <person name="Neiva M."/>
            <person name="Ramalho-Neto C.E."/>
            <person name="Nicolas M.F."/>
            <person name="Oliveira S.C."/>
            <person name="Paixao R.F.C."/>
            <person name="Pedrosa F.O."/>
            <person name="Pena S.D.J."/>
            <person name="Pereira M."/>
            <person name="Pereira-Ferrari L."/>
            <person name="Piffer I."/>
            <person name="Pinto L.S."/>
            <person name="Potrich D.P."/>
            <person name="Salim A.C.M."/>
            <person name="Santos F.R."/>
            <person name="Schmitt R."/>
            <person name="Schneider M.P.C."/>
            <person name="Schrank A."/>
            <person name="Schrank I.S."/>
            <person name="Schuck A.F."/>
            <person name="Seuanez H.N."/>
            <person name="Silva D.W."/>
            <person name="Silva R."/>
            <person name="Silva S.C."/>
            <person name="Soares C.M.A."/>
            <person name="Souza K.R.L."/>
            <person name="Souza R.C."/>
            <person name="Staats C.C."/>
            <person name="Steffens M.B.R."/>
            <person name="Teixeira S.M.R."/>
            <person name="Urmenyi T.P."/>
            <person name="Vainstein M.H."/>
            <person name="Zuccherato L.W."/>
            <person name="Simpson A.J.G."/>
            <person name="Zaha A."/>
        </authorList>
    </citation>
    <scope>NUCLEOTIDE SEQUENCE [LARGE SCALE GENOMIC DNA]</scope>
    <source>
        <strain>53</strain>
    </source>
</reference>